<sequence length="261" mass="28495">MNRIDGREFNELRPIKITRNFNKFAEGSVLIEMGNTKVICTASIEDKVPPFQKGTGKGWITSEYGMLPRATETRNPREVTKGRPSGRTMEIQRLIGRSLRSVVDLDVLGEKTIWIDCDVIQADGGTRTASITGSFIALADALNKLVEKGDIPKIPLKGFVAAVSVGIVEGNELLDLSFQEDSNALVDMNVVMTDKGEIVEIQGTGEGGPFTKQNLTDLLSLAEYGIEQIIKIQKEVLSDIVDKIGVDSVENNNSNPQSSQN</sequence>
<accession>B0K3T4</accession>
<gene>
    <name evidence="1" type="primary">rph</name>
    <name type="ordered locus">Teth514_0551</name>
</gene>
<protein>
    <recommendedName>
        <fullName evidence="1">Ribonuclease PH</fullName>
        <shortName evidence="1">RNase PH</shortName>
        <ecNumber evidence="1">2.7.7.56</ecNumber>
    </recommendedName>
    <alternativeName>
        <fullName evidence="1">tRNA nucleotidyltransferase</fullName>
    </alternativeName>
</protein>
<reference key="1">
    <citation type="submission" date="2008-01" db="EMBL/GenBank/DDBJ databases">
        <title>Complete sequence of Thermoanaerobacter sp. X514.</title>
        <authorList>
            <consortium name="US DOE Joint Genome Institute"/>
            <person name="Copeland A."/>
            <person name="Lucas S."/>
            <person name="Lapidus A."/>
            <person name="Barry K."/>
            <person name="Glavina del Rio T."/>
            <person name="Dalin E."/>
            <person name="Tice H."/>
            <person name="Pitluck S."/>
            <person name="Bruce D."/>
            <person name="Goodwin L."/>
            <person name="Saunders E."/>
            <person name="Brettin T."/>
            <person name="Detter J.C."/>
            <person name="Han C."/>
            <person name="Schmutz J."/>
            <person name="Larimer F."/>
            <person name="Land M."/>
            <person name="Hauser L."/>
            <person name="Kyrpides N."/>
            <person name="Kim E."/>
            <person name="Hemme C."/>
            <person name="Fields M.W."/>
            <person name="He Z."/>
            <person name="Zhou J."/>
            <person name="Richardson P."/>
        </authorList>
    </citation>
    <scope>NUCLEOTIDE SEQUENCE [LARGE SCALE GENOMIC DNA]</scope>
    <source>
        <strain>X514</strain>
    </source>
</reference>
<evidence type="ECO:0000255" key="1">
    <source>
        <dbReference type="HAMAP-Rule" id="MF_00564"/>
    </source>
</evidence>
<dbReference type="EC" id="2.7.7.56" evidence="1"/>
<dbReference type="EMBL" id="CP000923">
    <property type="protein sequence ID" value="ABY91859.1"/>
    <property type="molecule type" value="Genomic_DNA"/>
</dbReference>
<dbReference type="RefSeq" id="WP_003870475.1">
    <property type="nucleotide sequence ID" value="NC_010320.1"/>
</dbReference>
<dbReference type="SMR" id="B0K3T4"/>
<dbReference type="KEGG" id="tex:Teth514_0551"/>
<dbReference type="HOGENOM" id="CLU_050858_0_0_9"/>
<dbReference type="Proteomes" id="UP000002155">
    <property type="component" value="Chromosome"/>
</dbReference>
<dbReference type="GO" id="GO:0000175">
    <property type="term" value="F:3'-5'-RNA exonuclease activity"/>
    <property type="evidence" value="ECO:0007669"/>
    <property type="project" value="UniProtKB-UniRule"/>
</dbReference>
<dbReference type="GO" id="GO:0000049">
    <property type="term" value="F:tRNA binding"/>
    <property type="evidence" value="ECO:0007669"/>
    <property type="project" value="UniProtKB-UniRule"/>
</dbReference>
<dbReference type="GO" id="GO:0009022">
    <property type="term" value="F:tRNA nucleotidyltransferase activity"/>
    <property type="evidence" value="ECO:0007669"/>
    <property type="project" value="UniProtKB-UniRule"/>
</dbReference>
<dbReference type="GO" id="GO:0016075">
    <property type="term" value="P:rRNA catabolic process"/>
    <property type="evidence" value="ECO:0007669"/>
    <property type="project" value="UniProtKB-UniRule"/>
</dbReference>
<dbReference type="GO" id="GO:0006364">
    <property type="term" value="P:rRNA processing"/>
    <property type="evidence" value="ECO:0007669"/>
    <property type="project" value="UniProtKB-KW"/>
</dbReference>
<dbReference type="GO" id="GO:0008033">
    <property type="term" value="P:tRNA processing"/>
    <property type="evidence" value="ECO:0007669"/>
    <property type="project" value="UniProtKB-UniRule"/>
</dbReference>
<dbReference type="CDD" id="cd11362">
    <property type="entry name" value="RNase_PH_bact"/>
    <property type="match status" value="1"/>
</dbReference>
<dbReference type="FunFam" id="3.30.230.70:FF:000003">
    <property type="entry name" value="Ribonuclease PH"/>
    <property type="match status" value="1"/>
</dbReference>
<dbReference type="Gene3D" id="3.30.230.70">
    <property type="entry name" value="GHMP Kinase, N-terminal domain"/>
    <property type="match status" value="1"/>
</dbReference>
<dbReference type="HAMAP" id="MF_00564">
    <property type="entry name" value="RNase_PH"/>
    <property type="match status" value="1"/>
</dbReference>
<dbReference type="InterPro" id="IPR001247">
    <property type="entry name" value="ExoRNase_PH_dom1"/>
</dbReference>
<dbReference type="InterPro" id="IPR015847">
    <property type="entry name" value="ExoRNase_PH_dom2"/>
</dbReference>
<dbReference type="InterPro" id="IPR036345">
    <property type="entry name" value="ExoRNase_PH_dom2_sf"/>
</dbReference>
<dbReference type="InterPro" id="IPR027408">
    <property type="entry name" value="PNPase/RNase_PH_dom_sf"/>
</dbReference>
<dbReference type="InterPro" id="IPR020568">
    <property type="entry name" value="Ribosomal_Su5_D2-typ_SF"/>
</dbReference>
<dbReference type="InterPro" id="IPR050080">
    <property type="entry name" value="RNase_PH"/>
</dbReference>
<dbReference type="InterPro" id="IPR002381">
    <property type="entry name" value="RNase_PH_bac-type"/>
</dbReference>
<dbReference type="InterPro" id="IPR018336">
    <property type="entry name" value="RNase_PH_CS"/>
</dbReference>
<dbReference type="NCBIfam" id="TIGR01966">
    <property type="entry name" value="RNasePH"/>
    <property type="match status" value="1"/>
</dbReference>
<dbReference type="PANTHER" id="PTHR11953">
    <property type="entry name" value="EXOSOME COMPLEX COMPONENT"/>
    <property type="match status" value="1"/>
</dbReference>
<dbReference type="PANTHER" id="PTHR11953:SF0">
    <property type="entry name" value="EXOSOME COMPLEX COMPONENT RRP41"/>
    <property type="match status" value="1"/>
</dbReference>
<dbReference type="Pfam" id="PF01138">
    <property type="entry name" value="RNase_PH"/>
    <property type="match status" value="1"/>
</dbReference>
<dbReference type="Pfam" id="PF03725">
    <property type="entry name" value="RNase_PH_C"/>
    <property type="match status" value="1"/>
</dbReference>
<dbReference type="SUPFAM" id="SSF55666">
    <property type="entry name" value="Ribonuclease PH domain 2-like"/>
    <property type="match status" value="1"/>
</dbReference>
<dbReference type="SUPFAM" id="SSF54211">
    <property type="entry name" value="Ribosomal protein S5 domain 2-like"/>
    <property type="match status" value="1"/>
</dbReference>
<dbReference type="PROSITE" id="PS01277">
    <property type="entry name" value="RIBONUCLEASE_PH"/>
    <property type="match status" value="1"/>
</dbReference>
<keyword id="KW-0548">Nucleotidyltransferase</keyword>
<keyword id="KW-0694">RNA-binding</keyword>
<keyword id="KW-0698">rRNA processing</keyword>
<keyword id="KW-0808">Transferase</keyword>
<keyword id="KW-0819">tRNA processing</keyword>
<keyword id="KW-0820">tRNA-binding</keyword>
<feature type="chain" id="PRO_1000129383" description="Ribonuclease PH">
    <location>
        <begin position="1"/>
        <end position="261"/>
    </location>
</feature>
<feature type="binding site" evidence="1">
    <location>
        <position position="87"/>
    </location>
    <ligand>
        <name>phosphate</name>
        <dbReference type="ChEBI" id="CHEBI:43474"/>
        <note>substrate</note>
    </ligand>
</feature>
<feature type="binding site" evidence="1">
    <location>
        <begin position="125"/>
        <end position="127"/>
    </location>
    <ligand>
        <name>phosphate</name>
        <dbReference type="ChEBI" id="CHEBI:43474"/>
        <note>substrate</note>
    </ligand>
</feature>
<name>RNPH_THEPX</name>
<comment type="function">
    <text evidence="1">Phosphorolytic 3'-5' exoribonuclease that plays an important role in tRNA 3'-end maturation. Removes nucleotide residues following the 3'-CCA terminus of tRNAs; can also add nucleotides to the ends of RNA molecules by using nucleoside diphosphates as substrates, but this may not be physiologically important. Probably plays a role in initiation of 16S rRNA degradation (leading to ribosome degradation) during starvation.</text>
</comment>
<comment type="catalytic activity">
    <reaction evidence="1">
        <text>tRNA(n+1) + phosphate = tRNA(n) + a ribonucleoside 5'-diphosphate</text>
        <dbReference type="Rhea" id="RHEA:10628"/>
        <dbReference type="Rhea" id="RHEA-COMP:17343"/>
        <dbReference type="Rhea" id="RHEA-COMP:17344"/>
        <dbReference type="ChEBI" id="CHEBI:43474"/>
        <dbReference type="ChEBI" id="CHEBI:57930"/>
        <dbReference type="ChEBI" id="CHEBI:173114"/>
        <dbReference type="EC" id="2.7.7.56"/>
    </reaction>
</comment>
<comment type="subunit">
    <text evidence="1">Homohexameric ring arranged as a trimer of dimers.</text>
</comment>
<comment type="similarity">
    <text evidence="1">Belongs to the RNase PH family.</text>
</comment>
<organism>
    <name type="scientific">Thermoanaerobacter sp. (strain X514)</name>
    <dbReference type="NCBI Taxonomy" id="399726"/>
    <lineage>
        <taxon>Bacteria</taxon>
        <taxon>Bacillati</taxon>
        <taxon>Bacillota</taxon>
        <taxon>Clostridia</taxon>
        <taxon>Thermoanaerobacterales</taxon>
        <taxon>Thermoanaerobacteraceae</taxon>
        <taxon>Thermoanaerobacter</taxon>
    </lineage>
</organism>
<proteinExistence type="inferred from homology"/>